<organism>
    <name type="scientific">Chloroherpeton thalassium (strain ATCC 35110 / GB-78)</name>
    <dbReference type="NCBI Taxonomy" id="517418"/>
    <lineage>
        <taxon>Bacteria</taxon>
        <taxon>Pseudomonadati</taxon>
        <taxon>Chlorobiota</taxon>
        <taxon>Chlorobiia</taxon>
        <taxon>Chlorobiales</taxon>
        <taxon>Chloroherpetonaceae</taxon>
        <taxon>Chloroherpeton</taxon>
    </lineage>
</organism>
<comment type="function">
    <text evidence="1">Catalyzes the attachment of serine to tRNA(Ser). Is also able to aminoacylate tRNA(Sec) with serine, to form the misacylated tRNA L-seryl-tRNA(Sec), which will be further converted into selenocysteinyl-tRNA(Sec).</text>
</comment>
<comment type="catalytic activity">
    <reaction evidence="1">
        <text>tRNA(Ser) + L-serine + ATP = L-seryl-tRNA(Ser) + AMP + diphosphate + H(+)</text>
        <dbReference type="Rhea" id="RHEA:12292"/>
        <dbReference type="Rhea" id="RHEA-COMP:9669"/>
        <dbReference type="Rhea" id="RHEA-COMP:9703"/>
        <dbReference type="ChEBI" id="CHEBI:15378"/>
        <dbReference type="ChEBI" id="CHEBI:30616"/>
        <dbReference type="ChEBI" id="CHEBI:33019"/>
        <dbReference type="ChEBI" id="CHEBI:33384"/>
        <dbReference type="ChEBI" id="CHEBI:78442"/>
        <dbReference type="ChEBI" id="CHEBI:78533"/>
        <dbReference type="ChEBI" id="CHEBI:456215"/>
        <dbReference type="EC" id="6.1.1.11"/>
    </reaction>
</comment>
<comment type="catalytic activity">
    <reaction evidence="1">
        <text>tRNA(Sec) + L-serine + ATP = L-seryl-tRNA(Sec) + AMP + diphosphate + H(+)</text>
        <dbReference type="Rhea" id="RHEA:42580"/>
        <dbReference type="Rhea" id="RHEA-COMP:9742"/>
        <dbReference type="Rhea" id="RHEA-COMP:10128"/>
        <dbReference type="ChEBI" id="CHEBI:15378"/>
        <dbReference type="ChEBI" id="CHEBI:30616"/>
        <dbReference type="ChEBI" id="CHEBI:33019"/>
        <dbReference type="ChEBI" id="CHEBI:33384"/>
        <dbReference type="ChEBI" id="CHEBI:78442"/>
        <dbReference type="ChEBI" id="CHEBI:78533"/>
        <dbReference type="ChEBI" id="CHEBI:456215"/>
        <dbReference type="EC" id="6.1.1.11"/>
    </reaction>
</comment>
<comment type="pathway">
    <text evidence="1">Aminoacyl-tRNA biosynthesis; selenocysteinyl-tRNA(Sec) biosynthesis; L-seryl-tRNA(Sec) from L-serine and tRNA(Sec): step 1/1.</text>
</comment>
<comment type="subunit">
    <text evidence="1">Homodimer. The tRNA molecule binds across the dimer.</text>
</comment>
<comment type="subcellular location">
    <subcellularLocation>
        <location evidence="1">Cytoplasm</location>
    </subcellularLocation>
</comment>
<comment type="domain">
    <text evidence="1">Consists of two distinct domains, a catalytic core and a N-terminal extension that is involved in tRNA binding.</text>
</comment>
<comment type="similarity">
    <text evidence="1">Belongs to the class-II aminoacyl-tRNA synthetase family. Type-1 seryl-tRNA synthetase subfamily.</text>
</comment>
<sequence>MLDIKYVRENPDAVKKMLEMRLLASESKKIDELIRYDSERKAKVTESDTLKAMRNSVTQEIAKIKREKTGSADELIAEMKIVSDRISEIDAELREIETKQEELLLAVPNILHESVPEGKSAADNVVYKEVMDCKREFDFKPKDHIELGKSLGMLDFERGAKIAGAGFPLYIGKGASLERALINFMLDLHLEKHGYKEVFPPFFVNRDSLRGTGQWPKFADQVYYMNDDDIYAIPTAEVPVTNMHRDEMLQSKELPIKYAAYSACFRREAGSYGKDTKGFLRVHQFNKVEMVKFVLPETSYDELEALLGDAEDVLKALEIPYRVLLLCSGDISANAAKCYDIEVWSPAEEKFLEASSCSNFEDYQARRAQIRFRRQPKAKPEFVHTLNGSGLATSRLMVSLMENYQTPDGKIQVPKVLQKYMGCEVIG</sequence>
<keyword id="KW-0030">Aminoacyl-tRNA synthetase</keyword>
<keyword id="KW-0067">ATP-binding</keyword>
<keyword id="KW-0963">Cytoplasm</keyword>
<keyword id="KW-0436">Ligase</keyword>
<keyword id="KW-0547">Nucleotide-binding</keyword>
<keyword id="KW-0648">Protein biosynthesis</keyword>
<keyword id="KW-1185">Reference proteome</keyword>
<protein>
    <recommendedName>
        <fullName evidence="1">Serine--tRNA ligase</fullName>
        <ecNumber evidence="1">6.1.1.11</ecNumber>
    </recommendedName>
    <alternativeName>
        <fullName evidence="1">Seryl-tRNA synthetase</fullName>
        <shortName evidence="1">SerRS</shortName>
    </alternativeName>
    <alternativeName>
        <fullName evidence="1">Seryl-tRNA(Ser/Sec) synthetase</fullName>
    </alternativeName>
</protein>
<dbReference type="EC" id="6.1.1.11" evidence="1"/>
<dbReference type="EMBL" id="CP001100">
    <property type="protein sequence ID" value="ACF13033.1"/>
    <property type="molecule type" value="Genomic_DNA"/>
</dbReference>
<dbReference type="RefSeq" id="WP_012499117.1">
    <property type="nucleotide sequence ID" value="NC_011026.1"/>
</dbReference>
<dbReference type="SMR" id="B3QV79"/>
<dbReference type="STRING" id="517418.Ctha_0562"/>
<dbReference type="KEGG" id="cts:Ctha_0562"/>
<dbReference type="eggNOG" id="COG0172">
    <property type="taxonomic scope" value="Bacteria"/>
</dbReference>
<dbReference type="HOGENOM" id="CLU_023797_1_1_10"/>
<dbReference type="OrthoDB" id="9804647at2"/>
<dbReference type="UniPathway" id="UPA00906">
    <property type="reaction ID" value="UER00895"/>
</dbReference>
<dbReference type="Proteomes" id="UP000001208">
    <property type="component" value="Chromosome"/>
</dbReference>
<dbReference type="GO" id="GO:0005737">
    <property type="term" value="C:cytoplasm"/>
    <property type="evidence" value="ECO:0007669"/>
    <property type="project" value="UniProtKB-SubCell"/>
</dbReference>
<dbReference type="GO" id="GO:0005524">
    <property type="term" value="F:ATP binding"/>
    <property type="evidence" value="ECO:0007669"/>
    <property type="project" value="UniProtKB-UniRule"/>
</dbReference>
<dbReference type="GO" id="GO:0004828">
    <property type="term" value="F:serine-tRNA ligase activity"/>
    <property type="evidence" value="ECO:0007669"/>
    <property type="project" value="UniProtKB-UniRule"/>
</dbReference>
<dbReference type="GO" id="GO:0016260">
    <property type="term" value="P:selenocysteine biosynthetic process"/>
    <property type="evidence" value="ECO:0007669"/>
    <property type="project" value="UniProtKB-UniRule"/>
</dbReference>
<dbReference type="GO" id="GO:0006434">
    <property type="term" value="P:seryl-tRNA aminoacylation"/>
    <property type="evidence" value="ECO:0007669"/>
    <property type="project" value="UniProtKB-UniRule"/>
</dbReference>
<dbReference type="CDD" id="cd00770">
    <property type="entry name" value="SerRS_core"/>
    <property type="match status" value="1"/>
</dbReference>
<dbReference type="Gene3D" id="3.30.930.10">
    <property type="entry name" value="Bira Bifunctional Protein, Domain 2"/>
    <property type="match status" value="1"/>
</dbReference>
<dbReference type="Gene3D" id="1.10.287.40">
    <property type="entry name" value="Serine-tRNA synthetase, tRNA binding domain"/>
    <property type="match status" value="1"/>
</dbReference>
<dbReference type="HAMAP" id="MF_00176">
    <property type="entry name" value="Ser_tRNA_synth_type1"/>
    <property type="match status" value="1"/>
</dbReference>
<dbReference type="InterPro" id="IPR002314">
    <property type="entry name" value="aa-tRNA-synt_IIb"/>
</dbReference>
<dbReference type="InterPro" id="IPR006195">
    <property type="entry name" value="aa-tRNA-synth_II"/>
</dbReference>
<dbReference type="InterPro" id="IPR045864">
    <property type="entry name" value="aa-tRNA-synth_II/BPL/LPL"/>
</dbReference>
<dbReference type="InterPro" id="IPR002317">
    <property type="entry name" value="Ser-tRNA-ligase_type_1"/>
</dbReference>
<dbReference type="InterPro" id="IPR015866">
    <property type="entry name" value="Ser-tRNA-synth_1_N"/>
</dbReference>
<dbReference type="InterPro" id="IPR042103">
    <property type="entry name" value="SerRS_1_N_sf"/>
</dbReference>
<dbReference type="InterPro" id="IPR033729">
    <property type="entry name" value="SerRS_core"/>
</dbReference>
<dbReference type="InterPro" id="IPR010978">
    <property type="entry name" value="tRNA-bd_arm"/>
</dbReference>
<dbReference type="NCBIfam" id="TIGR00414">
    <property type="entry name" value="serS"/>
    <property type="match status" value="1"/>
</dbReference>
<dbReference type="PANTHER" id="PTHR43697:SF1">
    <property type="entry name" value="SERINE--TRNA LIGASE"/>
    <property type="match status" value="1"/>
</dbReference>
<dbReference type="PANTHER" id="PTHR43697">
    <property type="entry name" value="SERYL-TRNA SYNTHETASE"/>
    <property type="match status" value="1"/>
</dbReference>
<dbReference type="Pfam" id="PF02403">
    <property type="entry name" value="Seryl_tRNA_N"/>
    <property type="match status" value="1"/>
</dbReference>
<dbReference type="Pfam" id="PF00587">
    <property type="entry name" value="tRNA-synt_2b"/>
    <property type="match status" value="1"/>
</dbReference>
<dbReference type="PIRSF" id="PIRSF001529">
    <property type="entry name" value="Ser-tRNA-synth_IIa"/>
    <property type="match status" value="1"/>
</dbReference>
<dbReference type="PRINTS" id="PR00981">
    <property type="entry name" value="TRNASYNTHSER"/>
</dbReference>
<dbReference type="SUPFAM" id="SSF55681">
    <property type="entry name" value="Class II aaRS and biotin synthetases"/>
    <property type="match status" value="1"/>
</dbReference>
<dbReference type="SUPFAM" id="SSF46589">
    <property type="entry name" value="tRNA-binding arm"/>
    <property type="match status" value="1"/>
</dbReference>
<dbReference type="PROSITE" id="PS50862">
    <property type="entry name" value="AA_TRNA_LIGASE_II"/>
    <property type="match status" value="1"/>
</dbReference>
<gene>
    <name evidence="1" type="primary">serS</name>
    <name type="ordered locus">Ctha_0562</name>
</gene>
<reference key="1">
    <citation type="submission" date="2008-06" db="EMBL/GenBank/DDBJ databases">
        <title>Complete sequence of Chloroherpeton thalassium ATCC 35110.</title>
        <authorList>
            <consortium name="US DOE Joint Genome Institute"/>
            <person name="Lucas S."/>
            <person name="Copeland A."/>
            <person name="Lapidus A."/>
            <person name="Glavina del Rio T."/>
            <person name="Dalin E."/>
            <person name="Tice H."/>
            <person name="Bruce D."/>
            <person name="Goodwin L."/>
            <person name="Pitluck S."/>
            <person name="Schmutz J."/>
            <person name="Larimer F."/>
            <person name="Land M."/>
            <person name="Hauser L."/>
            <person name="Kyrpides N."/>
            <person name="Mikhailova N."/>
            <person name="Liu Z."/>
            <person name="Li T."/>
            <person name="Zhao F."/>
            <person name="Overmann J."/>
            <person name="Bryant D.A."/>
            <person name="Richardson P."/>
        </authorList>
    </citation>
    <scope>NUCLEOTIDE SEQUENCE [LARGE SCALE GENOMIC DNA]</scope>
    <source>
        <strain>ATCC 35110 / GB-78</strain>
    </source>
</reference>
<evidence type="ECO:0000255" key="1">
    <source>
        <dbReference type="HAMAP-Rule" id="MF_00176"/>
    </source>
</evidence>
<feature type="chain" id="PRO_1000098049" description="Serine--tRNA ligase">
    <location>
        <begin position="1"/>
        <end position="427"/>
    </location>
</feature>
<feature type="binding site" evidence="1">
    <location>
        <begin position="235"/>
        <end position="237"/>
    </location>
    <ligand>
        <name>L-serine</name>
        <dbReference type="ChEBI" id="CHEBI:33384"/>
    </ligand>
</feature>
<feature type="binding site" evidence="1">
    <location>
        <begin position="266"/>
        <end position="268"/>
    </location>
    <ligand>
        <name>ATP</name>
        <dbReference type="ChEBI" id="CHEBI:30616"/>
    </ligand>
</feature>
<feature type="binding site" evidence="1">
    <location>
        <position position="282"/>
    </location>
    <ligand>
        <name>ATP</name>
        <dbReference type="ChEBI" id="CHEBI:30616"/>
    </ligand>
</feature>
<feature type="binding site" evidence="1">
    <location>
        <position position="289"/>
    </location>
    <ligand>
        <name>L-serine</name>
        <dbReference type="ChEBI" id="CHEBI:33384"/>
    </ligand>
</feature>
<feature type="binding site" evidence="1">
    <location>
        <begin position="353"/>
        <end position="356"/>
    </location>
    <ligand>
        <name>ATP</name>
        <dbReference type="ChEBI" id="CHEBI:30616"/>
    </ligand>
</feature>
<feature type="binding site" evidence="1">
    <location>
        <position position="389"/>
    </location>
    <ligand>
        <name>L-serine</name>
        <dbReference type="ChEBI" id="CHEBI:33384"/>
    </ligand>
</feature>
<accession>B3QV79</accession>
<name>SYS_CHLT3</name>
<proteinExistence type="inferred from homology"/>